<accession>Q9KZZ7</accession>
<sequence>MTTSATSGTGPADPAGPTENSMRRALKRARDGVALDASEAAVLLQARGAHLDALTASAARVRDAGLEAAGRPGVITYSKSVFVPLTRLCRDKCHYCTFVTVPGKLRRAGHGMFMSPDEVLDIARKGAALGCKEALITLGDKPEDRWPEAREWLDAHGYDDTIAYVRAVSIRILEETGLLPHLNPGVMTWTDFQRLKPVAPSMGMMLETTATRLWSEPGGPHHGSPDKEPAVRLRVLEDAGRSSVPFTSGILIGIGETYEERAESLFALRRVSRSYHGIQELIIQNFRAKPDTAMRGMPDAELDELVAAVAVARHIMGPSACLQAPPNLVDAEYERLIGAGIDDWGGVSPLTIDHVNPERPWPQIDELAATSRAAGFELRERLCVYPEFVRRGEPWLDPRLRPHVAALADPETGLAREDAVVEGHAWQEPDEAFTATGRTDLHATIDTEGRTSDRRDDFDEVYGDWGALREAAAPGMAPERIDTDVRAALATAADDPTKLTDDEALALLHAEGPALDALCGIADDVRRSVVGDDVTYIVTRNINFTNVCYTGCRFCAFAQRRTDADAYTLSLDQVADRAQQAWEVGAVEVCMQGGIHPDLPGTAYFDIARAVKERVPGMHVHAFSPMEVVNGATRTGLSIREWLTAAKEAGLDSVPGTAAEILDDEVRWILTKGKLPAATWIEVIETAHELGIRSSSTMMYGHVDQPRHWLGHLRTLAGIQRRTGGFTEFVTLPFIHTNAPVYLAGIARPGPTLRDNRAVTAMARLLLHPHIPNIQTSWVKLGTEGAAEMLRSGANDLGGTLMEETISRMAGSSYGSYKSVKDLIAVADAAGRPAKPRTTLYGPVPEERQRAARDSDGHLPELLPVLD</sequence>
<comment type="function">
    <text>Catalyzes the radical-mediated synthesis of 7,8-didemethyl-8-hydroxy-5-deazariboflavin (FO) from 5-amino-6-(D-ribitylamino)uracil and L-tyrosine.</text>
</comment>
<comment type="catalytic activity">
    <reaction>
        <text>5-amino-6-(D-ribitylamino)uracil + L-tyrosine + S-adenosyl-L-methionine = 5-amino-5-(4-hydroxybenzyl)-6-(D-ribitylimino)-5,6-dihydrouracil + 2-iminoacetate + 5'-deoxyadenosine + L-methionine + H(+)</text>
        <dbReference type="Rhea" id="RHEA:55200"/>
        <dbReference type="ChEBI" id="CHEBI:15378"/>
        <dbReference type="ChEBI" id="CHEBI:15934"/>
        <dbReference type="ChEBI" id="CHEBI:17319"/>
        <dbReference type="ChEBI" id="CHEBI:57844"/>
        <dbReference type="ChEBI" id="CHEBI:58315"/>
        <dbReference type="ChEBI" id="CHEBI:59789"/>
        <dbReference type="ChEBI" id="CHEBI:77846"/>
        <dbReference type="ChEBI" id="CHEBI:85936"/>
        <dbReference type="EC" id="2.5.1.147"/>
    </reaction>
</comment>
<comment type="catalytic activity">
    <reaction>
        <text>5-amino-5-(4-hydroxybenzyl)-6-(D-ribitylimino)-5,6-dihydrouracil + S-adenosyl-L-methionine = 7,8-didemethyl-8-hydroxy-5-deazariboflavin + 5'-deoxyadenosine + L-methionine + NH4(+) + H(+)</text>
        <dbReference type="Rhea" id="RHEA:55204"/>
        <dbReference type="ChEBI" id="CHEBI:15378"/>
        <dbReference type="ChEBI" id="CHEBI:17319"/>
        <dbReference type="ChEBI" id="CHEBI:28938"/>
        <dbReference type="ChEBI" id="CHEBI:57844"/>
        <dbReference type="ChEBI" id="CHEBI:59789"/>
        <dbReference type="ChEBI" id="CHEBI:59904"/>
        <dbReference type="ChEBI" id="CHEBI:85936"/>
        <dbReference type="EC" id="4.3.1.32"/>
    </reaction>
</comment>
<comment type="cofactor">
    <cofactor evidence="1">
        <name>[4Fe-4S] cluster</name>
        <dbReference type="ChEBI" id="CHEBI:49883"/>
    </cofactor>
    <text evidence="1">Binds 2 [4Fe-4S] clusters. The clusters are coordinated with 3 cysteines and an exchangeable S-adenosyl-L-methionine.</text>
</comment>
<comment type="pathway">
    <text>Cofactor biosynthesis; coenzyme F0 biosynthesis.</text>
</comment>
<comment type="similarity">
    <text evidence="4">In the N-terminal section; belongs to the radical SAM superfamily. CofG family.</text>
</comment>
<comment type="similarity">
    <text evidence="4">In the C-terminal section; belongs to the radical SAM superfamily. CofH family.</text>
</comment>
<gene>
    <name type="primary">fbiC</name>
    <name type="ordered locus">SCO4429</name>
    <name type="ORF">SCD6.07</name>
</gene>
<keyword id="KW-0004">4Fe-4S</keyword>
<keyword id="KW-0408">Iron</keyword>
<keyword id="KW-0411">Iron-sulfur</keyword>
<keyword id="KW-0456">Lyase</keyword>
<keyword id="KW-0479">Metal-binding</keyword>
<keyword id="KW-1185">Reference proteome</keyword>
<keyword id="KW-0949">S-adenosyl-L-methionine</keyword>
<keyword id="KW-0808">Transferase</keyword>
<feature type="chain" id="PRO_0000147775" description="FO synthase">
    <location>
        <begin position="1"/>
        <end position="867"/>
    </location>
</feature>
<feature type="domain" description="Radical SAM core 1" evidence="2">
    <location>
        <begin position="75"/>
        <end position="325"/>
    </location>
</feature>
<feature type="domain" description="Radical SAM core 2" evidence="2">
    <location>
        <begin position="534"/>
        <end position="769"/>
    </location>
</feature>
<feature type="region of interest" description="Disordered" evidence="3">
    <location>
        <begin position="1"/>
        <end position="22"/>
    </location>
</feature>
<feature type="region of interest" description="CofG-like">
    <location>
        <begin position="76"/>
        <end position="407"/>
    </location>
</feature>
<feature type="region of interest" description="CofH-like">
    <location>
        <begin position="511"/>
        <end position="844"/>
    </location>
</feature>
<feature type="region of interest" description="Disordered" evidence="3">
    <location>
        <begin position="835"/>
        <end position="867"/>
    </location>
</feature>
<feature type="compositionally biased region" description="Basic and acidic residues" evidence="3">
    <location>
        <begin position="845"/>
        <end position="859"/>
    </location>
</feature>
<feature type="binding site" evidence="1">
    <location>
        <position position="89"/>
    </location>
    <ligand>
        <name>[4Fe-4S] cluster</name>
        <dbReference type="ChEBI" id="CHEBI:49883"/>
        <label>1</label>
        <note>4Fe-4S-S-AdoMet</note>
    </ligand>
</feature>
<feature type="binding site" evidence="1">
    <location>
        <position position="93"/>
    </location>
    <ligand>
        <name>[4Fe-4S] cluster</name>
        <dbReference type="ChEBI" id="CHEBI:49883"/>
        <label>1</label>
        <note>4Fe-4S-S-AdoMet</note>
    </ligand>
</feature>
<feature type="binding site" evidence="1">
    <location>
        <position position="96"/>
    </location>
    <ligand>
        <name>[4Fe-4S] cluster</name>
        <dbReference type="ChEBI" id="CHEBI:49883"/>
        <label>1</label>
        <note>4Fe-4S-S-AdoMet</note>
    </ligand>
</feature>
<feature type="binding site" evidence="1">
    <location>
        <position position="548"/>
    </location>
    <ligand>
        <name>[4Fe-4S] cluster</name>
        <dbReference type="ChEBI" id="CHEBI:49883"/>
        <label>2</label>
        <note>4Fe-4S-S-AdoMet</note>
    </ligand>
</feature>
<feature type="binding site" evidence="1">
    <location>
        <position position="552"/>
    </location>
    <ligand>
        <name>[4Fe-4S] cluster</name>
        <dbReference type="ChEBI" id="CHEBI:49883"/>
        <label>2</label>
        <note>4Fe-4S-S-AdoMet</note>
    </ligand>
</feature>
<feature type="binding site" evidence="1">
    <location>
        <position position="555"/>
    </location>
    <ligand>
        <name>[4Fe-4S] cluster</name>
        <dbReference type="ChEBI" id="CHEBI:49883"/>
        <label>2</label>
        <note>4Fe-4S-S-AdoMet</note>
    </ligand>
</feature>
<dbReference type="EC" id="4.3.1.32"/>
<dbReference type="EC" id="2.5.1.147"/>
<dbReference type="EMBL" id="AL939120">
    <property type="protein sequence ID" value="CAB88436.1"/>
    <property type="molecule type" value="Genomic_DNA"/>
</dbReference>
<dbReference type="RefSeq" id="NP_628596.1">
    <property type="nucleotide sequence ID" value="NC_003888.3"/>
</dbReference>
<dbReference type="RefSeq" id="WP_011029648.1">
    <property type="nucleotide sequence ID" value="NZ_VNID01000017.1"/>
</dbReference>
<dbReference type="SMR" id="Q9KZZ7"/>
<dbReference type="STRING" id="100226.gene:17762074"/>
<dbReference type="PaxDb" id="100226-SCO4429"/>
<dbReference type="KEGG" id="sco:SCO4429"/>
<dbReference type="PATRIC" id="fig|100226.15.peg.4498"/>
<dbReference type="eggNOG" id="COG1060">
    <property type="taxonomic scope" value="Bacteria"/>
</dbReference>
<dbReference type="HOGENOM" id="CLU_010522_1_0_11"/>
<dbReference type="InParanoid" id="Q9KZZ7"/>
<dbReference type="OrthoDB" id="9802027at2"/>
<dbReference type="PhylomeDB" id="Q9KZZ7"/>
<dbReference type="UniPathway" id="UPA00072"/>
<dbReference type="Proteomes" id="UP000001973">
    <property type="component" value="Chromosome"/>
</dbReference>
<dbReference type="GO" id="GO:0051539">
    <property type="term" value="F:4 iron, 4 sulfur cluster binding"/>
    <property type="evidence" value="ECO:0007669"/>
    <property type="project" value="UniProtKB-KW"/>
</dbReference>
<dbReference type="GO" id="GO:0141093">
    <property type="term" value="F:5-amino-6-(D-ribitylamino)uracil--L-tyrosine 4-hydroxyphenyl transferase activity"/>
    <property type="evidence" value="ECO:0007669"/>
    <property type="project" value="UniProtKB-EC"/>
</dbReference>
<dbReference type="GO" id="GO:0044689">
    <property type="term" value="F:7,8-didemethyl-8-hydroxy-5-deazariboflavin synthase activity"/>
    <property type="evidence" value="ECO:0000318"/>
    <property type="project" value="GO_Central"/>
</dbReference>
<dbReference type="GO" id="GO:0046872">
    <property type="term" value="F:metal ion binding"/>
    <property type="evidence" value="ECO:0007669"/>
    <property type="project" value="UniProtKB-KW"/>
</dbReference>
<dbReference type="CDD" id="cd01335">
    <property type="entry name" value="Radical_SAM"/>
    <property type="match status" value="2"/>
</dbReference>
<dbReference type="FunFam" id="3.20.20.70:FF:000134">
    <property type="entry name" value="7,8-didemethyl-8-hydroxy-5-deazariboflavin synthase"/>
    <property type="match status" value="1"/>
</dbReference>
<dbReference type="Gene3D" id="3.20.20.70">
    <property type="entry name" value="Aldolase class I"/>
    <property type="match status" value="2"/>
</dbReference>
<dbReference type="HAMAP" id="MF_01611">
    <property type="entry name" value="FO_synth_sub1"/>
    <property type="match status" value="1"/>
</dbReference>
<dbReference type="HAMAP" id="MF_01612">
    <property type="entry name" value="FO_synth_sub2"/>
    <property type="match status" value="1"/>
</dbReference>
<dbReference type="InterPro" id="IPR013785">
    <property type="entry name" value="Aldolase_TIM"/>
</dbReference>
<dbReference type="InterPro" id="IPR019939">
    <property type="entry name" value="CofG_family"/>
</dbReference>
<dbReference type="InterPro" id="IPR045567">
    <property type="entry name" value="CofH/MnqC-like_C"/>
</dbReference>
<dbReference type="InterPro" id="IPR019940">
    <property type="entry name" value="CofH_family"/>
</dbReference>
<dbReference type="InterPro" id="IPR006638">
    <property type="entry name" value="Elp3/MiaA/NifB-like_rSAM"/>
</dbReference>
<dbReference type="InterPro" id="IPR034405">
    <property type="entry name" value="F420"/>
</dbReference>
<dbReference type="InterPro" id="IPR020050">
    <property type="entry name" value="FO_synthase_su2"/>
</dbReference>
<dbReference type="InterPro" id="IPR007197">
    <property type="entry name" value="rSAM"/>
</dbReference>
<dbReference type="NCBIfam" id="TIGR00423">
    <property type="entry name" value="CofH family radical SAM protein"/>
    <property type="match status" value="1"/>
</dbReference>
<dbReference type="NCBIfam" id="TIGR03550">
    <property type="entry name" value="F420_cofG"/>
    <property type="match status" value="1"/>
</dbReference>
<dbReference type="NCBIfam" id="TIGR03551">
    <property type="entry name" value="F420_cofH"/>
    <property type="match status" value="1"/>
</dbReference>
<dbReference type="NCBIfam" id="NF004884">
    <property type="entry name" value="PRK06245.1"/>
    <property type="match status" value="1"/>
</dbReference>
<dbReference type="NCBIfam" id="NF005609">
    <property type="entry name" value="PRK07360.1"/>
    <property type="match status" value="1"/>
</dbReference>
<dbReference type="NCBIfam" id="NF006687">
    <property type="entry name" value="PRK09234.1"/>
    <property type="match status" value="1"/>
</dbReference>
<dbReference type="PANTHER" id="PTHR43076">
    <property type="entry name" value="FO SYNTHASE (COFH)"/>
    <property type="match status" value="1"/>
</dbReference>
<dbReference type="PANTHER" id="PTHR43076:SF1">
    <property type="entry name" value="LIPOYL SYNTHASE 2"/>
    <property type="match status" value="1"/>
</dbReference>
<dbReference type="Pfam" id="PF19288">
    <property type="entry name" value="CofH_C"/>
    <property type="match status" value="1"/>
</dbReference>
<dbReference type="Pfam" id="PF04055">
    <property type="entry name" value="Radical_SAM"/>
    <property type="match status" value="2"/>
</dbReference>
<dbReference type="SFLD" id="SFLDF00293">
    <property type="entry name" value="((2_3_4_5-tetrahydroxypentyl)a"/>
    <property type="match status" value="1"/>
</dbReference>
<dbReference type="SFLD" id="SFLDF00294">
    <property type="entry name" value="7_8-didemethyl-8-hydroxy-5-dea"/>
    <property type="match status" value="1"/>
</dbReference>
<dbReference type="SFLD" id="SFLDG01064">
    <property type="entry name" value="F420__menaquinone_cofactor_bio"/>
    <property type="match status" value="1"/>
</dbReference>
<dbReference type="SFLD" id="SFLDG01389">
    <property type="entry name" value="menaquinone_synthsis_involved"/>
    <property type="match status" value="1"/>
</dbReference>
<dbReference type="SFLD" id="SFLDS00029">
    <property type="entry name" value="Radical_SAM"/>
    <property type="match status" value="1"/>
</dbReference>
<dbReference type="SMART" id="SM00729">
    <property type="entry name" value="Elp3"/>
    <property type="match status" value="1"/>
</dbReference>
<dbReference type="SUPFAM" id="SSF102114">
    <property type="entry name" value="Radical SAM enzymes"/>
    <property type="match status" value="2"/>
</dbReference>
<dbReference type="PROSITE" id="PS51918">
    <property type="entry name" value="RADICAL_SAM"/>
    <property type="match status" value="2"/>
</dbReference>
<organism>
    <name type="scientific">Streptomyces coelicolor (strain ATCC BAA-471 / A3(2) / M145)</name>
    <dbReference type="NCBI Taxonomy" id="100226"/>
    <lineage>
        <taxon>Bacteria</taxon>
        <taxon>Bacillati</taxon>
        <taxon>Actinomycetota</taxon>
        <taxon>Actinomycetes</taxon>
        <taxon>Kitasatosporales</taxon>
        <taxon>Streptomycetaceae</taxon>
        <taxon>Streptomyces</taxon>
        <taxon>Streptomyces albidoflavus group</taxon>
    </lineage>
</organism>
<evidence type="ECO:0000250" key="1"/>
<evidence type="ECO:0000255" key="2">
    <source>
        <dbReference type="PROSITE-ProRule" id="PRU01266"/>
    </source>
</evidence>
<evidence type="ECO:0000256" key="3">
    <source>
        <dbReference type="SAM" id="MobiDB-lite"/>
    </source>
</evidence>
<evidence type="ECO:0000305" key="4"/>
<reference key="1">
    <citation type="journal article" date="2002" name="Nature">
        <title>Complete genome sequence of the model actinomycete Streptomyces coelicolor A3(2).</title>
        <authorList>
            <person name="Bentley S.D."/>
            <person name="Chater K.F."/>
            <person name="Cerdeno-Tarraga A.-M."/>
            <person name="Challis G.L."/>
            <person name="Thomson N.R."/>
            <person name="James K.D."/>
            <person name="Harris D.E."/>
            <person name="Quail M.A."/>
            <person name="Kieser H."/>
            <person name="Harper D."/>
            <person name="Bateman A."/>
            <person name="Brown S."/>
            <person name="Chandra G."/>
            <person name="Chen C.W."/>
            <person name="Collins M."/>
            <person name="Cronin A."/>
            <person name="Fraser A."/>
            <person name="Goble A."/>
            <person name="Hidalgo J."/>
            <person name="Hornsby T."/>
            <person name="Howarth S."/>
            <person name="Huang C.-H."/>
            <person name="Kieser T."/>
            <person name="Larke L."/>
            <person name="Murphy L.D."/>
            <person name="Oliver K."/>
            <person name="O'Neil S."/>
            <person name="Rabbinowitsch E."/>
            <person name="Rajandream M.A."/>
            <person name="Rutherford K.M."/>
            <person name="Rutter S."/>
            <person name="Seeger K."/>
            <person name="Saunders D."/>
            <person name="Sharp S."/>
            <person name="Squares R."/>
            <person name="Squares S."/>
            <person name="Taylor K."/>
            <person name="Warren T."/>
            <person name="Wietzorrek A."/>
            <person name="Woodward J.R."/>
            <person name="Barrell B.G."/>
            <person name="Parkhill J."/>
            <person name="Hopwood D.A."/>
        </authorList>
    </citation>
    <scope>NUCLEOTIDE SEQUENCE [LARGE SCALE GENOMIC DNA]</scope>
    <source>
        <strain>ATCC BAA-471 / A3(2) / M145</strain>
    </source>
</reference>
<name>FBIC_STRCO</name>
<proteinExistence type="inferred from homology"/>
<protein>
    <recommendedName>
        <fullName>FO synthase</fullName>
    </recommendedName>
    <domain>
        <recommendedName>
            <fullName>7,8-didemethyl-8-hydroxy-5-deazariboflavin synthase</fullName>
            <ecNumber>4.3.1.32</ecNumber>
        </recommendedName>
    </domain>
    <domain>
        <recommendedName>
            <fullName>5-amino-6-(D-ribitylamino)uracil--L-tyrosine 4-hydroxyphenyl transferase</fullName>
            <ecNumber>2.5.1.147</ecNumber>
        </recommendedName>
    </domain>
</protein>